<evidence type="ECO:0000255" key="1">
    <source>
        <dbReference type="HAMAP-Rule" id="MF_00275"/>
    </source>
</evidence>
<name>KDPA_SORC5</name>
<dbReference type="EMBL" id="AM746676">
    <property type="protein sequence ID" value="CAN91510.1"/>
    <property type="molecule type" value="Genomic_DNA"/>
</dbReference>
<dbReference type="RefSeq" id="WP_012233987.1">
    <property type="nucleotide sequence ID" value="NC_010162.1"/>
</dbReference>
<dbReference type="SMR" id="A9F773"/>
<dbReference type="STRING" id="448385.sce1352"/>
<dbReference type="KEGG" id="scl:sce1352"/>
<dbReference type="eggNOG" id="COG2060">
    <property type="taxonomic scope" value="Bacteria"/>
</dbReference>
<dbReference type="HOGENOM" id="CLU_018614_3_0_7"/>
<dbReference type="OrthoDB" id="9763796at2"/>
<dbReference type="BioCyc" id="SCEL448385:SCE_RS07000-MONOMER"/>
<dbReference type="Proteomes" id="UP000002139">
    <property type="component" value="Chromosome"/>
</dbReference>
<dbReference type="GO" id="GO:0005886">
    <property type="term" value="C:plasma membrane"/>
    <property type="evidence" value="ECO:0007669"/>
    <property type="project" value="UniProtKB-SubCell"/>
</dbReference>
<dbReference type="GO" id="GO:0008556">
    <property type="term" value="F:P-type potassium transmembrane transporter activity"/>
    <property type="evidence" value="ECO:0007669"/>
    <property type="project" value="InterPro"/>
</dbReference>
<dbReference type="GO" id="GO:0030955">
    <property type="term" value="F:potassium ion binding"/>
    <property type="evidence" value="ECO:0007669"/>
    <property type="project" value="UniProtKB-UniRule"/>
</dbReference>
<dbReference type="HAMAP" id="MF_00275">
    <property type="entry name" value="KdpA"/>
    <property type="match status" value="1"/>
</dbReference>
<dbReference type="InterPro" id="IPR004623">
    <property type="entry name" value="KdpA"/>
</dbReference>
<dbReference type="NCBIfam" id="TIGR00680">
    <property type="entry name" value="kdpA"/>
    <property type="match status" value="1"/>
</dbReference>
<dbReference type="PANTHER" id="PTHR30607">
    <property type="entry name" value="POTASSIUM-TRANSPORTING ATPASE A CHAIN"/>
    <property type="match status" value="1"/>
</dbReference>
<dbReference type="PANTHER" id="PTHR30607:SF2">
    <property type="entry name" value="POTASSIUM-TRANSPORTING ATPASE POTASSIUM-BINDING SUBUNIT"/>
    <property type="match status" value="1"/>
</dbReference>
<dbReference type="Pfam" id="PF03814">
    <property type="entry name" value="KdpA"/>
    <property type="match status" value="1"/>
</dbReference>
<dbReference type="PIRSF" id="PIRSF001294">
    <property type="entry name" value="K_ATPaseA"/>
    <property type="match status" value="1"/>
</dbReference>
<organism>
    <name type="scientific">Sorangium cellulosum (strain So ce56)</name>
    <name type="common">Polyangium cellulosum (strain So ce56)</name>
    <dbReference type="NCBI Taxonomy" id="448385"/>
    <lineage>
        <taxon>Bacteria</taxon>
        <taxon>Pseudomonadati</taxon>
        <taxon>Myxococcota</taxon>
        <taxon>Polyangia</taxon>
        <taxon>Polyangiales</taxon>
        <taxon>Polyangiaceae</taxon>
        <taxon>Sorangium</taxon>
    </lineage>
</organism>
<keyword id="KW-0997">Cell inner membrane</keyword>
<keyword id="KW-1003">Cell membrane</keyword>
<keyword id="KW-0406">Ion transport</keyword>
<keyword id="KW-0472">Membrane</keyword>
<keyword id="KW-0630">Potassium</keyword>
<keyword id="KW-0633">Potassium transport</keyword>
<keyword id="KW-1185">Reference proteome</keyword>
<keyword id="KW-0812">Transmembrane</keyword>
<keyword id="KW-1133">Transmembrane helix</keyword>
<keyword id="KW-0813">Transport</keyword>
<reference key="1">
    <citation type="journal article" date="2007" name="Nat. Biotechnol.">
        <title>Complete genome sequence of the myxobacterium Sorangium cellulosum.</title>
        <authorList>
            <person name="Schneiker S."/>
            <person name="Perlova O."/>
            <person name="Kaiser O."/>
            <person name="Gerth K."/>
            <person name="Alici A."/>
            <person name="Altmeyer M.O."/>
            <person name="Bartels D."/>
            <person name="Bekel T."/>
            <person name="Beyer S."/>
            <person name="Bode E."/>
            <person name="Bode H.B."/>
            <person name="Bolten C.J."/>
            <person name="Choudhuri J.V."/>
            <person name="Doss S."/>
            <person name="Elnakady Y.A."/>
            <person name="Frank B."/>
            <person name="Gaigalat L."/>
            <person name="Goesmann A."/>
            <person name="Groeger C."/>
            <person name="Gross F."/>
            <person name="Jelsbak L."/>
            <person name="Jelsbak L."/>
            <person name="Kalinowski J."/>
            <person name="Kegler C."/>
            <person name="Knauber T."/>
            <person name="Konietzny S."/>
            <person name="Kopp M."/>
            <person name="Krause L."/>
            <person name="Krug D."/>
            <person name="Linke B."/>
            <person name="Mahmud T."/>
            <person name="Martinez-Arias R."/>
            <person name="McHardy A.C."/>
            <person name="Merai M."/>
            <person name="Meyer F."/>
            <person name="Mormann S."/>
            <person name="Munoz-Dorado J."/>
            <person name="Perez J."/>
            <person name="Pradella S."/>
            <person name="Rachid S."/>
            <person name="Raddatz G."/>
            <person name="Rosenau F."/>
            <person name="Rueckert C."/>
            <person name="Sasse F."/>
            <person name="Scharfe M."/>
            <person name="Schuster S.C."/>
            <person name="Suen G."/>
            <person name="Treuner-Lange A."/>
            <person name="Velicer G.J."/>
            <person name="Vorholter F.-J."/>
            <person name="Weissman K.J."/>
            <person name="Welch R.D."/>
            <person name="Wenzel S.C."/>
            <person name="Whitworth D.E."/>
            <person name="Wilhelm S."/>
            <person name="Wittmann C."/>
            <person name="Bloecker H."/>
            <person name="Puehler A."/>
            <person name="Mueller R."/>
        </authorList>
    </citation>
    <scope>NUCLEOTIDE SEQUENCE [LARGE SCALE GENOMIC DNA]</scope>
    <source>
        <strain>So ce56</strain>
    </source>
</reference>
<comment type="function">
    <text evidence="1">Part of the high-affinity ATP-driven potassium transport (or Kdp) system, which catalyzes the hydrolysis of ATP coupled with the electrogenic transport of potassium into the cytoplasm. This subunit binds the periplasmic potassium ions and delivers the ions to the membrane domain of KdpB through an intramembrane tunnel.</text>
</comment>
<comment type="subunit">
    <text evidence="1">The system is composed of three essential subunits: KdpA, KdpB and KdpC.</text>
</comment>
<comment type="subcellular location">
    <subcellularLocation>
        <location evidence="1">Cell inner membrane</location>
        <topology evidence="1">Multi-pass membrane protein</topology>
    </subcellularLocation>
</comment>
<comment type="similarity">
    <text evidence="1">Belongs to the KdpA family.</text>
</comment>
<protein>
    <recommendedName>
        <fullName evidence="1">Potassium-transporting ATPase potassium-binding subunit</fullName>
    </recommendedName>
    <alternativeName>
        <fullName evidence="1">ATP phosphohydrolase [potassium-transporting] A chain</fullName>
    </alternativeName>
    <alternativeName>
        <fullName evidence="1">Potassium-binding and translocating subunit A</fullName>
    </alternativeName>
    <alternativeName>
        <fullName evidence="1">Potassium-translocating ATPase A chain</fullName>
    </alternativeName>
</protein>
<accession>A9F773</accession>
<sequence length="580" mass="59938">MTASGALQPALYLAVLIGLSVPLGTYMARVYQGERGLMASVLGPLERLAYRAAGVRPDQEMRWKDYAFAVLAFNLAGLLVLYALQRLQGVLPLNPEGMAAVPPDLAFNTAASFASNTNWQAYGGESTLSYLTQMAGLGVQNFVSAATGMAVLVALIRGITRKTADTVGSFWVDLVRSTLYILLPLSLLLAVLLVSQGVVQGFGGHQSASLLQAVKDQGGSAVVEQVIPMGPAASQIAIKQLGTNGGGFFNVNSAHPLENPTALSNFLEMLAILLIPAALCHTFGRMVGDRRQGWAVLAAMTAIFAVLLVACVASEQAGNPALSALGVDQAASALQAGGNMEGKEARFGITSSALWATATTAASNGSVNAMHDSFTPLGGLVPLWLMQLGEVVFGGVGSGLYGMLMFVVIAVFVAGLMVGRTPEYLGKKIEAFEMKMASLVVLFPAITVLVGTAIAVTTEGGQKGVFNPGPHGFSEVLYAFSSGANNNGSAFGGLGANSPFYNTAIGVAMLVGRYAVIVPVLALAGSLARKKLVPAGPGTLPTHTPLFVGLLTGTVLLVGALTFVPALALGPVVEHLEMTR</sequence>
<proteinExistence type="inferred from homology"/>
<feature type="chain" id="PRO_1000078789" description="Potassium-transporting ATPase potassium-binding subunit">
    <location>
        <begin position="1"/>
        <end position="580"/>
    </location>
</feature>
<feature type="transmembrane region" description="Helical" evidence="1">
    <location>
        <begin position="3"/>
        <end position="23"/>
    </location>
</feature>
<feature type="transmembrane region" description="Helical" evidence="1">
    <location>
        <begin position="65"/>
        <end position="85"/>
    </location>
</feature>
<feature type="transmembrane region" description="Helical" evidence="1">
    <location>
        <begin position="136"/>
        <end position="156"/>
    </location>
</feature>
<feature type="transmembrane region" description="Helical" evidence="1">
    <location>
        <begin position="179"/>
        <end position="199"/>
    </location>
</feature>
<feature type="transmembrane region" description="Helical" evidence="1">
    <location>
        <begin position="263"/>
        <end position="283"/>
    </location>
</feature>
<feature type="transmembrane region" description="Helical" evidence="1">
    <location>
        <begin position="293"/>
        <end position="313"/>
    </location>
</feature>
<feature type="transmembrane region" description="Helical" evidence="1">
    <location>
        <begin position="399"/>
        <end position="419"/>
    </location>
</feature>
<feature type="transmembrane region" description="Helical" evidence="1">
    <location>
        <begin position="436"/>
        <end position="456"/>
    </location>
</feature>
<feature type="transmembrane region" description="Helical" evidence="1">
    <location>
        <begin position="504"/>
        <end position="524"/>
    </location>
</feature>
<feature type="transmembrane region" description="Helical" evidence="1">
    <location>
        <begin position="546"/>
        <end position="566"/>
    </location>
</feature>
<gene>
    <name evidence="1" type="primary">kdpA</name>
    <name type="ordered locus">sce1352</name>
</gene>